<accession>P65833</accession>
<accession>Q97NP1</accession>
<sequence length="275" mass="30227">MKLRRSDRMVVISNYLINNPYKLTSLNTFAEKYESAKSSISEDIVIIKRAFEEIEIGHIQTVTGAGGGVIFTPSISSQDAKEMVEDLRTKLSESDRILPGGYIYLSDLLSTPAILKNIGRIIAKSFMDQKIDAVMTVATKGVPLANAVANVLNVSFVIVRRDLKITEGSTVSVNYVSGSSGDRIEKMFLSKRSLKAGSRVLIVDDFLKGGGTVNGMISLLREFDSELAGVAVFADNAQEEREKQFDYKSLLKVTNIDVKNQAIDVEVGNIFDEDK</sequence>
<dbReference type="EMBL" id="AE007317">
    <property type="protein sequence ID" value="AAL00596.1"/>
    <property type="molecule type" value="Genomic_DNA"/>
</dbReference>
<dbReference type="PIR" id="G98095">
    <property type="entry name" value="G98095"/>
</dbReference>
<dbReference type="RefSeq" id="NP_359385.1">
    <property type="nucleotide sequence ID" value="NC_003098.1"/>
</dbReference>
<dbReference type="RefSeq" id="WP_001809310.1">
    <property type="nucleotide sequence ID" value="NC_003098.1"/>
</dbReference>
<dbReference type="SMR" id="P65833"/>
<dbReference type="STRING" id="171101.spr1793"/>
<dbReference type="KEGG" id="spr:spr1793"/>
<dbReference type="PATRIC" id="fig|171101.6.peg.1935"/>
<dbReference type="eggNOG" id="COG0503">
    <property type="taxonomic scope" value="Bacteria"/>
</dbReference>
<dbReference type="HOGENOM" id="CLU_088227_0_0_9"/>
<dbReference type="Proteomes" id="UP000000586">
    <property type="component" value="Chromosome"/>
</dbReference>
<dbReference type="GO" id="GO:0003677">
    <property type="term" value="F:DNA binding"/>
    <property type="evidence" value="ECO:0007669"/>
    <property type="project" value="UniProtKB-KW"/>
</dbReference>
<dbReference type="GO" id="GO:0045892">
    <property type="term" value="P:negative regulation of DNA-templated transcription"/>
    <property type="evidence" value="ECO:0007669"/>
    <property type="project" value="InterPro"/>
</dbReference>
<dbReference type="GO" id="GO:0045982">
    <property type="term" value="P:negative regulation of purine nucleobase metabolic process"/>
    <property type="evidence" value="ECO:0007669"/>
    <property type="project" value="InterPro"/>
</dbReference>
<dbReference type="CDD" id="cd06223">
    <property type="entry name" value="PRTases_typeI"/>
    <property type="match status" value="1"/>
</dbReference>
<dbReference type="Gene3D" id="3.40.50.2020">
    <property type="match status" value="1"/>
</dbReference>
<dbReference type="Gene3D" id="1.10.10.10">
    <property type="entry name" value="Winged helix-like DNA-binding domain superfamily/Winged helix DNA-binding domain"/>
    <property type="match status" value="1"/>
</dbReference>
<dbReference type="InterPro" id="IPR000836">
    <property type="entry name" value="PRibTrfase_dom"/>
</dbReference>
<dbReference type="InterPro" id="IPR029057">
    <property type="entry name" value="PRTase-like"/>
</dbReference>
<dbReference type="InterPro" id="IPR050118">
    <property type="entry name" value="Pur/Pyrimidine_PRTase"/>
</dbReference>
<dbReference type="InterPro" id="IPR015265">
    <property type="entry name" value="PuR_N"/>
</dbReference>
<dbReference type="InterPro" id="IPR010078">
    <property type="entry name" value="PurR_Bsub"/>
</dbReference>
<dbReference type="InterPro" id="IPR036388">
    <property type="entry name" value="WH-like_DNA-bd_sf"/>
</dbReference>
<dbReference type="InterPro" id="IPR036390">
    <property type="entry name" value="WH_DNA-bd_sf"/>
</dbReference>
<dbReference type="NCBIfam" id="TIGR01743">
    <property type="entry name" value="purR_Bsub"/>
    <property type="match status" value="1"/>
</dbReference>
<dbReference type="PANTHER" id="PTHR43864">
    <property type="entry name" value="HYPOXANTHINE/GUANINE PHOSPHORIBOSYLTRANSFERASE"/>
    <property type="match status" value="1"/>
</dbReference>
<dbReference type="PANTHER" id="PTHR43864:SF2">
    <property type="entry name" value="PUR OPERON REPRESSOR"/>
    <property type="match status" value="1"/>
</dbReference>
<dbReference type="Pfam" id="PF00156">
    <property type="entry name" value="Pribosyltran"/>
    <property type="match status" value="1"/>
</dbReference>
<dbReference type="Pfam" id="PF09182">
    <property type="entry name" value="PuR_N"/>
    <property type="match status" value="1"/>
</dbReference>
<dbReference type="SUPFAM" id="SSF53271">
    <property type="entry name" value="PRTase-like"/>
    <property type="match status" value="1"/>
</dbReference>
<dbReference type="SUPFAM" id="SSF46785">
    <property type="entry name" value="Winged helix' DNA-binding domain"/>
    <property type="match status" value="1"/>
</dbReference>
<reference key="1">
    <citation type="journal article" date="2001" name="J. Bacteriol.">
        <title>Genome of the bacterium Streptococcus pneumoniae strain R6.</title>
        <authorList>
            <person name="Hoskins J."/>
            <person name="Alborn W.E. Jr."/>
            <person name="Arnold J."/>
            <person name="Blaszczak L.C."/>
            <person name="Burgett S."/>
            <person name="DeHoff B.S."/>
            <person name="Estrem S.T."/>
            <person name="Fritz L."/>
            <person name="Fu D.-J."/>
            <person name="Fuller W."/>
            <person name="Geringer C."/>
            <person name="Gilmour R."/>
            <person name="Glass J.S."/>
            <person name="Khoja H."/>
            <person name="Kraft A.R."/>
            <person name="Lagace R.E."/>
            <person name="LeBlanc D.J."/>
            <person name="Lee L.N."/>
            <person name="Lefkowitz E.J."/>
            <person name="Lu J."/>
            <person name="Matsushima P."/>
            <person name="McAhren S.M."/>
            <person name="McHenney M."/>
            <person name="McLeaster K."/>
            <person name="Mundy C.W."/>
            <person name="Nicas T.I."/>
            <person name="Norris F.H."/>
            <person name="O'Gara M."/>
            <person name="Peery R.B."/>
            <person name="Robertson G.T."/>
            <person name="Rockey P."/>
            <person name="Sun P.-M."/>
            <person name="Winkler M.E."/>
            <person name="Yang Y."/>
            <person name="Young-Bellido M."/>
            <person name="Zhao G."/>
            <person name="Zook C.A."/>
            <person name="Baltz R.H."/>
            <person name="Jaskunas S.R."/>
            <person name="Rosteck P.R. Jr."/>
            <person name="Skatrud P.L."/>
            <person name="Glass J.I."/>
        </authorList>
    </citation>
    <scope>NUCLEOTIDE SEQUENCE [LARGE SCALE GENOMIC DNA]</scope>
    <source>
        <strain>ATCC BAA-255 / R6</strain>
    </source>
</reference>
<proteinExistence type="inferred from homology"/>
<keyword id="KW-0238">DNA-binding</keyword>
<keyword id="KW-1185">Reference proteome</keyword>
<keyword id="KW-0804">Transcription</keyword>
<keyword id="KW-0805">Transcription regulation</keyword>
<comment type="subunit">
    <text evidence="1">Homodimer.</text>
</comment>
<comment type="domain">
    <text evidence="1">Contains an N-terminal DNA-binding winged helix-turn-helix domain and a C-terminal regulatory domain (or effector binding domain) resembling phosphoribosyltransferase (PRT) domain (By similarity). However, the PRT domain lacks enzymatic activity and serves a purely regulatory role by binding effector molecules (By similarity).</text>
</comment>
<comment type="similarity">
    <text evidence="2">Belongs to the purine/pyrimidine phosphoribosyltransferase family. PurR subfamily.</text>
</comment>
<feature type="chain" id="PRO_0000139703" description="Probable purine biosynthesis transcriptional regulator PurR">
    <location>
        <begin position="1"/>
        <end position="275"/>
    </location>
</feature>
<feature type="region of interest" description="DNA binding domain" evidence="1">
    <location>
        <begin position="1"/>
        <end position="73"/>
    </location>
</feature>
<feature type="region of interest" description="Effector binding domain" evidence="1">
    <location>
        <begin position="74"/>
        <end position="275"/>
    </location>
</feature>
<name>PURR_STRR6</name>
<gene>
    <name type="primary">purR</name>
    <name type="ordered locus">spr1793</name>
</gene>
<protein>
    <recommendedName>
        <fullName evidence="2">Probable purine biosynthesis transcriptional regulator PurR</fullName>
    </recommendedName>
</protein>
<organism>
    <name type="scientific">Streptococcus pneumoniae (strain ATCC BAA-255 / R6)</name>
    <dbReference type="NCBI Taxonomy" id="171101"/>
    <lineage>
        <taxon>Bacteria</taxon>
        <taxon>Bacillati</taxon>
        <taxon>Bacillota</taxon>
        <taxon>Bacilli</taxon>
        <taxon>Lactobacillales</taxon>
        <taxon>Streptococcaceae</taxon>
        <taxon>Streptococcus</taxon>
    </lineage>
</organism>
<evidence type="ECO:0000250" key="1">
    <source>
        <dbReference type="UniProtKB" id="P37551"/>
    </source>
</evidence>
<evidence type="ECO:0000305" key="2"/>